<feature type="chain" id="PRO_0000102286" description="Lipoyl synthase">
    <location>
        <begin position="1"/>
        <end position="297"/>
    </location>
</feature>
<feature type="domain" description="Radical SAM core" evidence="2">
    <location>
        <begin position="53"/>
        <end position="269"/>
    </location>
</feature>
<feature type="binding site" evidence="1">
    <location>
        <position position="40"/>
    </location>
    <ligand>
        <name>[4Fe-4S] cluster</name>
        <dbReference type="ChEBI" id="CHEBI:49883"/>
        <label>1</label>
    </ligand>
</feature>
<feature type="binding site" evidence="1">
    <location>
        <position position="45"/>
    </location>
    <ligand>
        <name>[4Fe-4S] cluster</name>
        <dbReference type="ChEBI" id="CHEBI:49883"/>
        <label>1</label>
    </ligand>
</feature>
<feature type="binding site" evidence="1">
    <location>
        <position position="51"/>
    </location>
    <ligand>
        <name>[4Fe-4S] cluster</name>
        <dbReference type="ChEBI" id="CHEBI:49883"/>
        <label>1</label>
    </ligand>
</feature>
<feature type="binding site" evidence="1">
    <location>
        <position position="67"/>
    </location>
    <ligand>
        <name>[4Fe-4S] cluster</name>
        <dbReference type="ChEBI" id="CHEBI:49883"/>
        <label>2</label>
        <note>4Fe-4S-S-AdoMet</note>
    </ligand>
</feature>
<feature type="binding site" evidence="1">
    <location>
        <position position="71"/>
    </location>
    <ligand>
        <name>[4Fe-4S] cluster</name>
        <dbReference type="ChEBI" id="CHEBI:49883"/>
        <label>2</label>
        <note>4Fe-4S-S-AdoMet</note>
    </ligand>
</feature>
<feature type="binding site" evidence="1">
    <location>
        <position position="74"/>
    </location>
    <ligand>
        <name>[4Fe-4S] cluster</name>
        <dbReference type="ChEBI" id="CHEBI:49883"/>
        <label>2</label>
        <note>4Fe-4S-S-AdoMet</note>
    </ligand>
</feature>
<feature type="binding site" evidence="1">
    <location>
        <position position="280"/>
    </location>
    <ligand>
        <name>[4Fe-4S] cluster</name>
        <dbReference type="ChEBI" id="CHEBI:49883"/>
        <label>1</label>
    </ligand>
</feature>
<evidence type="ECO:0000255" key="1">
    <source>
        <dbReference type="HAMAP-Rule" id="MF_00206"/>
    </source>
</evidence>
<evidence type="ECO:0000255" key="2">
    <source>
        <dbReference type="PROSITE-ProRule" id="PRU01266"/>
    </source>
</evidence>
<name>LIPA_BACCR</name>
<dbReference type="EC" id="2.8.1.8" evidence="1"/>
<dbReference type="EMBL" id="AE016877">
    <property type="protein sequence ID" value="AAP11845.1"/>
    <property type="molecule type" value="Genomic_DNA"/>
</dbReference>
<dbReference type="RefSeq" id="NP_834644.1">
    <property type="nucleotide sequence ID" value="NC_004722.1"/>
</dbReference>
<dbReference type="RefSeq" id="WP_000166373.1">
    <property type="nucleotide sequence ID" value="NC_004722.1"/>
</dbReference>
<dbReference type="SMR" id="Q816A0"/>
<dbReference type="STRING" id="226900.BC_4973"/>
<dbReference type="KEGG" id="bce:BC4973"/>
<dbReference type="PATRIC" id="fig|226900.8.peg.5124"/>
<dbReference type="HOGENOM" id="CLU_033144_2_1_9"/>
<dbReference type="Proteomes" id="UP000001417">
    <property type="component" value="Chromosome"/>
</dbReference>
<dbReference type="GO" id="GO:0005737">
    <property type="term" value="C:cytoplasm"/>
    <property type="evidence" value="ECO:0007669"/>
    <property type="project" value="UniProtKB-SubCell"/>
</dbReference>
<dbReference type="GO" id="GO:0051539">
    <property type="term" value="F:4 iron, 4 sulfur cluster binding"/>
    <property type="evidence" value="ECO:0007669"/>
    <property type="project" value="UniProtKB-UniRule"/>
</dbReference>
<dbReference type="GO" id="GO:0016992">
    <property type="term" value="F:lipoate synthase activity"/>
    <property type="evidence" value="ECO:0007669"/>
    <property type="project" value="UniProtKB-UniRule"/>
</dbReference>
<dbReference type="GO" id="GO:0046872">
    <property type="term" value="F:metal ion binding"/>
    <property type="evidence" value="ECO:0007669"/>
    <property type="project" value="UniProtKB-KW"/>
</dbReference>
<dbReference type="CDD" id="cd01335">
    <property type="entry name" value="Radical_SAM"/>
    <property type="match status" value="1"/>
</dbReference>
<dbReference type="FunFam" id="3.20.20.70:FF:000040">
    <property type="entry name" value="Lipoyl synthase"/>
    <property type="match status" value="1"/>
</dbReference>
<dbReference type="Gene3D" id="3.20.20.70">
    <property type="entry name" value="Aldolase class I"/>
    <property type="match status" value="1"/>
</dbReference>
<dbReference type="HAMAP" id="MF_00206">
    <property type="entry name" value="Lipoyl_synth"/>
    <property type="match status" value="1"/>
</dbReference>
<dbReference type="InterPro" id="IPR013785">
    <property type="entry name" value="Aldolase_TIM"/>
</dbReference>
<dbReference type="InterPro" id="IPR006638">
    <property type="entry name" value="Elp3/MiaA/NifB-like_rSAM"/>
</dbReference>
<dbReference type="InterPro" id="IPR031691">
    <property type="entry name" value="LIAS_N"/>
</dbReference>
<dbReference type="InterPro" id="IPR003698">
    <property type="entry name" value="Lipoyl_synth"/>
</dbReference>
<dbReference type="InterPro" id="IPR007197">
    <property type="entry name" value="rSAM"/>
</dbReference>
<dbReference type="NCBIfam" id="TIGR00510">
    <property type="entry name" value="lipA"/>
    <property type="match status" value="1"/>
</dbReference>
<dbReference type="NCBIfam" id="NF004019">
    <property type="entry name" value="PRK05481.1"/>
    <property type="match status" value="1"/>
</dbReference>
<dbReference type="NCBIfam" id="NF009544">
    <property type="entry name" value="PRK12928.1"/>
    <property type="match status" value="1"/>
</dbReference>
<dbReference type="PANTHER" id="PTHR10949">
    <property type="entry name" value="LIPOYL SYNTHASE"/>
    <property type="match status" value="1"/>
</dbReference>
<dbReference type="PANTHER" id="PTHR10949:SF0">
    <property type="entry name" value="LIPOYL SYNTHASE, MITOCHONDRIAL"/>
    <property type="match status" value="1"/>
</dbReference>
<dbReference type="Pfam" id="PF16881">
    <property type="entry name" value="LIAS_N"/>
    <property type="match status" value="1"/>
</dbReference>
<dbReference type="Pfam" id="PF04055">
    <property type="entry name" value="Radical_SAM"/>
    <property type="match status" value="1"/>
</dbReference>
<dbReference type="PIRSF" id="PIRSF005963">
    <property type="entry name" value="Lipoyl_synth"/>
    <property type="match status" value="1"/>
</dbReference>
<dbReference type="SFLD" id="SFLDF00271">
    <property type="entry name" value="lipoyl_synthase"/>
    <property type="match status" value="1"/>
</dbReference>
<dbReference type="SFLD" id="SFLDG01058">
    <property type="entry name" value="lipoyl_synthase_like"/>
    <property type="match status" value="1"/>
</dbReference>
<dbReference type="SMART" id="SM00729">
    <property type="entry name" value="Elp3"/>
    <property type="match status" value="1"/>
</dbReference>
<dbReference type="SUPFAM" id="SSF102114">
    <property type="entry name" value="Radical SAM enzymes"/>
    <property type="match status" value="1"/>
</dbReference>
<dbReference type="PROSITE" id="PS51918">
    <property type="entry name" value="RADICAL_SAM"/>
    <property type="match status" value="1"/>
</dbReference>
<gene>
    <name evidence="1" type="primary">lipA</name>
    <name type="ordered locus">BC_4973</name>
</gene>
<sequence>MTKQTEYKRKPEWLKIKLNTNENYTGLKKMMRSKNLHTVCEEAKCPNIHECWAVRKTATFMILGAVCTRACRFCAVKTGLPTELDLQEPERVADSVVQMGLKHVVITAVARDDLKDGGAAVFAETVRAVRRKNPFTSIEVLPSDMGGVEENLKMLMDAKPDILNHNIETVRRLSDRVRARAKYERSLEFLRRAKEMQPDIPTKSSIMVGLGETREDLIEAMDDLRANNVDILTLGQYLQPSKKHLPVLKYYPPAEFAELKEIALSKGFSHCEAGPLVRSSYHADEQVRSAKEKTAGS</sequence>
<comment type="function">
    <text evidence="1">Catalyzes the radical-mediated insertion of two sulfur atoms into the C-6 and C-8 positions of the octanoyl moiety bound to the lipoyl domains of lipoate-dependent enzymes, thereby converting the octanoylated domains into lipoylated derivatives.</text>
</comment>
<comment type="catalytic activity">
    <reaction evidence="1">
        <text>[[Fe-S] cluster scaffold protein carrying a second [4Fe-4S](2+) cluster] + N(6)-octanoyl-L-lysyl-[protein] + 2 oxidized [2Fe-2S]-[ferredoxin] + 2 S-adenosyl-L-methionine + 4 H(+) = [[Fe-S] cluster scaffold protein] + N(6)-[(R)-dihydrolipoyl]-L-lysyl-[protein] + 4 Fe(3+) + 2 hydrogen sulfide + 2 5'-deoxyadenosine + 2 L-methionine + 2 reduced [2Fe-2S]-[ferredoxin]</text>
        <dbReference type="Rhea" id="RHEA:16585"/>
        <dbReference type="Rhea" id="RHEA-COMP:9928"/>
        <dbReference type="Rhea" id="RHEA-COMP:10000"/>
        <dbReference type="Rhea" id="RHEA-COMP:10001"/>
        <dbReference type="Rhea" id="RHEA-COMP:10475"/>
        <dbReference type="Rhea" id="RHEA-COMP:14568"/>
        <dbReference type="Rhea" id="RHEA-COMP:14569"/>
        <dbReference type="ChEBI" id="CHEBI:15378"/>
        <dbReference type="ChEBI" id="CHEBI:17319"/>
        <dbReference type="ChEBI" id="CHEBI:29034"/>
        <dbReference type="ChEBI" id="CHEBI:29919"/>
        <dbReference type="ChEBI" id="CHEBI:33722"/>
        <dbReference type="ChEBI" id="CHEBI:33737"/>
        <dbReference type="ChEBI" id="CHEBI:33738"/>
        <dbReference type="ChEBI" id="CHEBI:57844"/>
        <dbReference type="ChEBI" id="CHEBI:59789"/>
        <dbReference type="ChEBI" id="CHEBI:78809"/>
        <dbReference type="ChEBI" id="CHEBI:83100"/>
        <dbReference type="EC" id="2.8.1.8"/>
    </reaction>
</comment>
<comment type="cofactor">
    <cofactor evidence="1">
        <name>[4Fe-4S] cluster</name>
        <dbReference type="ChEBI" id="CHEBI:49883"/>
    </cofactor>
    <text evidence="1">Binds 2 [4Fe-4S] clusters per subunit. One cluster is coordinated with 3 cysteines and an exchangeable S-adenosyl-L-methionine.</text>
</comment>
<comment type="pathway">
    <text evidence="1">Protein modification; protein lipoylation via endogenous pathway; protein N(6)-(lipoyl)lysine from octanoyl-[acyl-carrier-protein].</text>
</comment>
<comment type="subcellular location">
    <subcellularLocation>
        <location evidence="1">Cytoplasm</location>
    </subcellularLocation>
</comment>
<comment type="similarity">
    <text evidence="1">Belongs to the radical SAM superfamily. Lipoyl synthase family.</text>
</comment>
<reference key="1">
    <citation type="journal article" date="2003" name="Nature">
        <title>Genome sequence of Bacillus cereus and comparative analysis with Bacillus anthracis.</title>
        <authorList>
            <person name="Ivanova N."/>
            <person name="Sorokin A."/>
            <person name="Anderson I."/>
            <person name="Galleron N."/>
            <person name="Candelon B."/>
            <person name="Kapatral V."/>
            <person name="Bhattacharyya A."/>
            <person name="Reznik G."/>
            <person name="Mikhailova N."/>
            <person name="Lapidus A."/>
            <person name="Chu L."/>
            <person name="Mazur M."/>
            <person name="Goltsman E."/>
            <person name="Larsen N."/>
            <person name="D'Souza M."/>
            <person name="Walunas T."/>
            <person name="Grechkin Y."/>
            <person name="Pusch G."/>
            <person name="Haselkorn R."/>
            <person name="Fonstein M."/>
            <person name="Ehrlich S.D."/>
            <person name="Overbeek R."/>
            <person name="Kyrpides N.C."/>
        </authorList>
    </citation>
    <scope>NUCLEOTIDE SEQUENCE [LARGE SCALE GENOMIC DNA]</scope>
    <source>
        <strain>ATCC 14579 / DSM 31 / CCUG 7414 / JCM 2152 / NBRC 15305 / NCIMB 9373 / NCTC 2599 / NRRL B-3711</strain>
    </source>
</reference>
<accession>Q816A0</accession>
<keyword id="KW-0004">4Fe-4S</keyword>
<keyword id="KW-0963">Cytoplasm</keyword>
<keyword id="KW-0408">Iron</keyword>
<keyword id="KW-0411">Iron-sulfur</keyword>
<keyword id="KW-0479">Metal-binding</keyword>
<keyword id="KW-1185">Reference proteome</keyword>
<keyword id="KW-0949">S-adenosyl-L-methionine</keyword>
<keyword id="KW-0808">Transferase</keyword>
<protein>
    <recommendedName>
        <fullName evidence="1">Lipoyl synthase</fullName>
        <ecNumber evidence="1">2.8.1.8</ecNumber>
    </recommendedName>
    <alternativeName>
        <fullName evidence="1">Lip-syn</fullName>
        <shortName evidence="1">LS</shortName>
    </alternativeName>
    <alternativeName>
        <fullName evidence="1">Lipoate synthase</fullName>
    </alternativeName>
    <alternativeName>
        <fullName evidence="1">Lipoic acid synthase</fullName>
    </alternativeName>
    <alternativeName>
        <fullName evidence="1">Sulfur insertion protein LipA</fullName>
    </alternativeName>
</protein>
<proteinExistence type="inferred from homology"/>
<organism>
    <name type="scientific">Bacillus cereus (strain ATCC 14579 / DSM 31 / CCUG 7414 / JCM 2152 / NBRC 15305 / NCIMB 9373 / NCTC 2599 / NRRL B-3711)</name>
    <dbReference type="NCBI Taxonomy" id="226900"/>
    <lineage>
        <taxon>Bacteria</taxon>
        <taxon>Bacillati</taxon>
        <taxon>Bacillota</taxon>
        <taxon>Bacilli</taxon>
        <taxon>Bacillales</taxon>
        <taxon>Bacillaceae</taxon>
        <taxon>Bacillus</taxon>
        <taxon>Bacillus cereus group</taxon>
    </lineage>
</organism>